<gene>
    <name evidence="1" type="primary">nqrB</name>
</gene>
<name>NQRB_VIBAN</name>
<comment type="function">
    <text evidence="1">NQR complex catalyzes the reduction of ubiquinone-1 to ubiquinol by two successive reactions, coupled with the transport of Na(+) ions from the cytoplasm to the periplasm. NqrA to NqrE are probably involved in the second step, the conversion of ubisemiquinone to ubiquinol.</text>
</comment>
<comment type="catalytic activity">
    <reaction evidence="1">
        <text>a ubiquinone + n Na(+)(in) + NADH + H(+) = a ubiquinol + n Na(+)(out) + NAD(+)</text>
        <dbReference type="Rhea" id="RHEA:47748"/>
        <dbReference type="Rhea" id="RHEA-COMP:9565"/>
        <dbReference type="Rhea" id="RHEA-COMP:9566"/>
        <dbReference type="ChEBI" id="CHEBI:15378"/>
        <dbReference type="ChEBI" id="CHEBI:16389"/>
        <dbReference type="ChEBI" id="CHEBI:17976"/>
        <dbReference type="ChEBI" id="CHEBI:29101"/>
        <dbReference type="ChEBI" id="CHEBI:57540"/>
        <dbReference type="ChEBI" id="CHEBI:57945"/>
        <dbReference type="EC" id="7.2.1.1"/>
    </reaction>
</comment>
<comment type="cofactor">
    <cofactor evidence="1">
        <name>FMN</name>
        <dbReference type="ChEBI" id="CHEBI:58210"/>
    </cofactor>
</comment>
<comment type="subunit">
    <text evidence="1">Composed of six subunits; NqrA, NqrB, NqrC, NqrD, NqrE and NqrF.</text>
</comment>
<comment type="subcellular location">
    <subcellularLocation>
        <location evidence="1">Cell inner membrane</location>
        <topology evidence="1">Multi-pass membrane protein</topology>
    </subcellularLocation>
</comment>
<comment type="similarity">
    <text evidence="1">Belongs to the NqrB/RnfD family.</text>
</comment>
<keyword id="KW-0997">Cell inner membrane</keyword>
<keyword id="KW-1003">Cell membrane</keyword>
<keyword id="KW-0285">Flavoprotein</keyword>
<keyword id="KW-0288">FMN</keyword>
<keyword id="KW-0406">Ion transport</keyword>
<keyword id="KW-0472">Membrane</keyword>
<keyword id="KW-0520">NAD</keyword>
<keyword id="KW-0597">Phosphoprotein</keyword>
<keyword id="KW-0915">Sodium</keyword>
<keyword id="KW-0739">Sodium transport</keyword>
<keyword id="KW-1278">Translocase</keyword>
<keyword id="KW-0812">Transmembrane</keyword>
<keyword id="KW-1133">Transmembrane helix</keyword>
<keyword id="KW-0813">Transport</keyword>
<keyword id="KW-0830">Ubiquinone</keyword>
<sequence length="414" mass="45367">MGLKKFLEDIEHHFEPGGKHEKWFALYEAAATLFYTPGLVTKRSSHVRDSVDLKRIMIMVWLAVFPAMFWGMYNVGHQSITALNHLYSGAELATVISGNWHYWLTEMLGGTLSTQAGWASMMLLGATYFLPIYATVFLVGGFWEVLFCMVRKHEVNEGFFVTSILFALIVPPTLPLWQAALGITFGVVVAKEIFGGTGRNFLNPALAGRAFLFFAYPAQISGDVVWTAADGFSGATALSQWAQGGNGALINKVTGEAITWMDAFVGNIPGSIGEVSTLALAIGAAFIVYMGIASWRIIAGVMVGMIAISTLFNVIGSDTNAMFNMPWHWHLVLGGFAFGMFFMATDPVSASFTNKGKWAYGILIGAMCVMIRVVNPAYPEGMMLAILFANLFAPLFDHIVIEKNIKRRLARYGK</sequence>
<proteinExistence type="inferred from homology"/>
<feature type="chain" id="PRO_0000074443" description="Na(+)-translocating NADH-quinone reductase subunit B">
    <location>
        <begin position="1"/>
        <end position="414"/>
    </location>
</feature>
<feature type="transmembrane region" description="Helical" evidence="1">
    <location>
        <begin position="56"/>
        <end position="76"/>
    </location>
</feature>
<feature type="transmembrane region" description="Helical" evidence="1">
    <location>
        <begin position="82"/>
        <end position="104"/>
    </location>
</feature>
<feature type="transmembrane region" description="Helical" evidence="1">
    <location>
        <begin position="129"/>
        <end position="149"/>
    </location>
</feature>
<feature type="transmembrane region" description="Helical" evidence="1">
    <location>
        <begin position="164"/>
        <end position="184"/>
    </location>
</feature>
<feature type="transmembrane region" description="Helical" evidence="1">
    <location>
        <begin position="275"/>
        <end position="295"/>
    </location>
</feature>
<feature type="transmembrane region" description="Helical" evidence="1">
    <location>
        <begin position="297"/>
        <end position="317"/>
    </location>
</feature>
<feature type="transmembrane region" description="Helical" evidence="1">
    <location>
        <begin position="325"/>
        <end position="345"/>
    </location>
</feature>
<feature type="transmembrane region" description="Helical" evidence="1">
    <location>
        <begin position="358"/>
        <end position="378"/>
    </location>
</feature>
<feature type="transmembrane region" description="Helical" evidence="1">
    <location>
        <begin position="381"/>
        <end position="401"/>
    </location>
</feature>
<feature type="modified residue" description="FMN phosphoryl threonine" evidence="1">
    <location>
        <position position="236"/>
    </location>
</feature>
<reference key="1">
    <citation type="submission" date="2004-01" db="EMBL/GenBank/DDBJ databases">
        <title>Cloning, sequencing and transcriptional regulation of Na+-dependent NADH:quinone oxidoreductase gene of Vibrio anguillarum, a fish pathogen.</title>
        <authorList>
            <person name="Fujiwara-Nagata E."/>
            <person name="Eguchi Y."/>
            <person name="Utsumi R."/>
            <person name="Eguchi M."/>
        </authorList>
    </citation>
    <scope>NUCLEOTIDE SEQUENCE [GENOMIC DNA]</scope>
</reference>
<protein>
    <recommendedName>
        <fullName evidence="1">Na(+)-translocating NADH-quinone reductase subunit B</fullName>
        <shortName evidence="1">Na(+)-NQR subunit B</shortName>
        <shortName evidence="1">Na(+)-translocating NQR subunit B</shortName>
        <ecNumber evidence="1">7.2.1.1</ecNumber>
    </recommendedName>
    <alternativeName>
        <fullName evidence="1">NQR complex subunit B</fullName>
    </alternativeName>
    <alternativeName>
        <fullName evidence="1">NQR-1 subunit B</fullName>
    </alternativeName>
</protein>
<accession>Q75R63</accession>
<evidence type="ECO:0000255" key="1">
    <source>
        <dbReference type="HAMAP-Rule" id="MF_00426"/>
    </source>
</evidence>
<dbReference type="EC" id="7.2.1.1" evidence="1"/>
<dbReference type="EMBL" id="AB159077">
    <property type="protein sequence ID" value="BAD14949.1"/>
    <property type="molecule type" value="Genomic_DNA"/>
</dbReference>
<dbReference type="RefSeq" id="WP_013856172.1">
    <property type="nucleotide sequence ID" value="NZ_VTYO01000002.1"/>
</dbReference>
<dbReference type="SMR" id="Q75R63"/>
<dbReference type="STRING" id="55601.AA407_03520"/>
<dbReference type="OMA" id="FAPTIDH"/>
<dbReference type="OrthoDB" id="9776359at2"/>
<dbReference type="GO" id="GO:0005886">
    <property type="term" value="C:plasma membrane"/>
    <property type="evidence" value="ECO:0007669"/>
    <property type="project" value="UniProtKB-SubCell"/>
</dbReference>
<dbReference type="GO" id="GO:0010181">
    <property type="term" value="F:FMN binding"/>
    <property type="evidence" value="ECO:0007669"/>
    <property type="project" value="InterPro"/>
</dbReference>
<dbReference type="GO" id="GO:0016655">
    <property type="term" value="F:oxidoreductase activity, acting on NAD(P)H, quinone or similar compound as acceptor"/>
    <property type="evidence" value="ECO:0007669"/>
    <property type="project" value="UniProtKB-UniRule"/>
</dbReference>
<dbReference type="GO" id="GO:0022904">
    <property type="term" value="P:respiratory electron transport chain"/>
    <property type="evidence" value="ECO:0007669"/>
    <property type="project" value="InterPro"/>
</dbReference>
<dbReference type="GO" id="GO:0006814">
    <property type="term" value="P:sodium ion transport"/>
    <property type="evidence" value="ECO:0007669"/>
    <property type="project" value="UniProtKB-UniRule"/>
</dbReference>
<dbReference type="GO" id="GO:0055085">
    <property type="term" value="P:transmembrane transport"/>
    <property type="evidence" value="ECO:0007669"/>
    <property type="project" value="InterPro"/>
</dbReference>
<dbReference type="HAMAP" id="MF_00426">
    <property type="entry name" value="NqrB"/>
    <property type="match status" value="1"/>
</dbReference>
<dbReference type="InterPro" id="IPR010966">
    <property type="entry name" value="NqrB"/>
</dbReference>
<dbReference type="InterPro" id="IPR004338">
    <property type="entry name" value="NqrB/RnfD"/>
</dbReference>
<dbReference type="NCBIfam" id="TIGR01937">
    <property type="entry name" value="nqrB"/>
    <property type="match status" value="1"/>
</dbReference>
<dbReference type="NCBIfam" id="NF003756">
    <property type="entry name" value="PRK05349.1"/>
    <property type="match status" value="1"/>
</dbReference>
<dbReference type="PANTHER" id="PTHR30578">
    <property type="entry name" value="ELECTRON TRANSPORT COMPLEX PROTEIN RNFD"/>
    <property type="match status" value="1"/>
</dbReference>
<dbReference type="PANTHER" id="PTHR30578:SF1">
    <property type="entry name" value="NA(+)-TRANSLOCATING NADH-QUINONE REDUCTASE SUBUNIT B"/>
    <property type="match status" value="1"/>
</dbReference>
<dbReference type="Pfam" id="PF03116">
    <property type="entry name" value="NQR2_RnfD_RnfE"/>
    <property type="match status" value="1"/>
</dbReference>
<dbReference type="PIRSF" id="PIRSF016055">
    <property type="entry name" value="NADH-UbQ_OxRdtase_B_su"/>
    <property type="match status" value="1"/>
</dbReference>
<organism>
    <name type="scientific">Vibrio anguillarum</name>
    <name type="common">Listonella anguillarum</name>
    <dbReference type="NCBI Taxonomy" id="55601"/>
    <lineage>
        <taxon>Bacteria</taxon>
        <taxon>Pseudomonadati</taxon>
        <taxon>Pseudomonadota</taxon>
        <taxon>Gammaproteobacteria</taxon>
        <taxon>Vibrionales</taxon>
        <taxon>Vibrionaceae</taxon>
        <taxon>Vibrio</taxon>
    </lineage>
</organism>